<keyword id="KW-1003">Cell membrane</keyword>
<keyword id="KW-0328">Glycosyltransferase</keyword>
<keyword id="KW-0441">Lipid A biosynthesis</keyword>
<keyword id="KW-0444">Lipid biosynthesis</keyword>
<keyword id="KW-0443">Lipid metabolism</keyword>
<keyword id="KW-0448">Lipopolysaccharide biosynthesis</keyword>
<keyword id="KW-0472">Membrane</keyword>
<keyword id="KW-0808">Transferase</keyword>
<keyword id="KW-0812">Transmembrane</keyword>
<keyword id="KW-1133">Transmembrane helix</keyword>
<organism>
    <name type="scientific">Rhizobium johnstonii (strain DSM 114642 / LMG 32736 / 3841)</name>
    <name type="common">Rhizobium leguminosarum bv. viciae</name>
    <dbReference type="NCBI Taxonomy" id="216596"/>
    <lineage>
        <taxon>Bacteria</taxon>
        <taxon>Pseudomonadati</taxon>
        <taxon>Pseudomonadota</taxon>
        <taxon>Alphaproteobacteria</taxon>
        <taxon>Hyphomicrobiales</taxon>
        <taxon>Rhizobiaceae</taxon>
        <taxon>Rhizobium/Agrobacterium group</taxon>
        <taxon>Rhizobium</taxon>
        <taxon>Rhizobium johnstonii</taxon>
    </lineage>
</organism>
<accession>Q1MLH5</accession>
<reference key="1">
    <citation type="journal article" date="2006" name="Genome Biol.">
        <title>The genome of Rhizobium leguminosarum has recognizable core and accessory components.</title>
        <authorList>
            <person name="Young J.P.W."/>
            <person name="Crossman L.C."/>
            <person name="Johnston A.W.B."/>
            <person name="Thomson N.R."/>
            <person name="Ghazoui Z.F."/>
            <person name="Hull K.H."/>
            <person name="Wexler M."/>
            <person name="Curson A.R.J."/>
            <person name="Todd J.D."/>
            <person name="Poole P.S."/>
            <person name="Mauchline T.H."/>
            <person name="East A.K."/>
            <person name="Quail M.A."/>
            <person name="Churcher C."/>
            <person name="Arrowsmith C."/>
            <person name="Cherevach I."/>
            <person name="Chillingworth T."/>
            <person name="Clarke K."/>
            <person name="Cronin A."/>
            <person name="Davis P."/>
            <person name="Fraser A."/>
            <person name="Hance Z."/>
            <person name="Hauser H."/>
            <person name="Jagels K."/>
            <person name="Moule S."/>
            <person name="Mungall K."/>
            <person name="Norbertczak H."/>
            <person name="Rabbinowitsch E."/>
            <person name="Sanders M."/>
            <person name="Simmonds M."/>
            <person name="Whitehead S."/>
            <person name="Parkhill J."/>
        </authorList>
    </citation>
    <scope>NUCLEOTIDE SEQUENCE [LARGE SCALE GENOMIC DNA]</scope>
    <source>
        <strain>DSM 114642 / LMG 32736 / 3841</strain>
    </source>
</reference>
<reference key="2">
    <citation type="journal article" date="2012" name="J. Biol. Chem.">
        <title>Characterization of galacturonosyl transferase genes rgtA, rgtB, rgtC, rgtD, and rgtE responsible for lipopolysaccharide synthesis in nitrogen-fixing endosymbiont Rhizobium leguminosarum: lipopolysaccharide core and lipid galacturonosyl residues confer membrane stability.</title>
        <authorList>
            <person name="Brown D.B."/>
            <person name="Forsberg L.S."/>
            <person name="Kannenberg E.L."/>
            <person name="Carlson R.W."/>
        </authorList>
    </citation>
    <scope>FUNCTION</scope>
    <scope>DISRUPTION PHENOTYPE</scope>
    <scope>PATHWAY</scope>
    <source>
        <strain>DSM 114642 / LMG 32736 / 3841</strain>
    </source>
</reference>
<dbReference type="EC" id="2.4.1.-" evidence="4"/>
<dbReference type="EMBL" id="AM236080">
    <property type="protein sequence ID" value="CAK06178.1"/>
    <property type="molecule type" value="Genomic_DNA"/>
</dbReference>
<dbReference type="RefSeq" id="WP_011650458.1">
    <property type="nucleotide sequence ID" value="NC_008380.1"/>
</dbReference>
<dbReference type="SMR" id="Q1MLH5"/>
<dbReference type="EnsemblBacteria" id="CAK06178">
    <property type="protein sequence ID" value="CAK06178"/>
    <property type="gene ID" value="RL0684"/>
</dbReference>
<dbReference type="KEGG" id="rle:RL0684"/>
<dbReference type="eggNOG" id="COG1807">
    <property type="taxonomic scope" value="Bacteria"/>
</dbReference>
<dbReference type="HOGENOM" id="CLU_016165_3_0_5"/>
<dbReference type="UniPathway" id="UPA00973"/>
<dbReference type="Proteomes" id="UP000006575">
    <property type="component" value="Chromosome"/>
</dbReference>
<dbReference type="GO" id="GO:0005886">
    <property type="term" value="C:plasma membrane"/>
    <property type="evidence" value="ECO:0007669"/>
    <property type="project" value="UniProtKB-SubCell"/>
</dbReference>
<dbReference type="GO" id="GO:0016758">
    <property type="term" value="F:hexosyltransferase activity"/>
    <property type="evidence" value="ECO:0000315"/>
    <property type="project" value="UniProtKB"/>
</dbReference>
<dbReference type="GO" id="GO:0016763">
    <property type="term" value="F:pentosyltransferase activity"/>
    <property type="evidence" value="ECO:0007669"/>
    <property type="project" value="TreeGrafter"/>
</dbReference>
<dbReference type="GO" id="GO:0009245">
    <property type="term" value="P:lipid A biosynthetic process"/>
    <property type="evidence" value="ECO:0007669"/>
    <property type="project" value="UniProtKB-UniPathway"/>
</dbReference>
<dbReference type="GO" id="GO:0009103">
    <property type="term" value="P:lipopolysaccharide biosynthetic process"/>
    <property type="evidence" value="ECO:0000315"/>
    <property type="project" value="UniProtKB"/>
</dbReference>
<dbReference type="InterPro" id="IPR050297">
    <property type="entry name" value="LipidA_mod_glycosyltrf_83"/>
</dbReference>
<dbReference type="InterPro" id="IPR038731">
    <property type="entry name" value="RgtA/B/C-like"/>
</dbReference>
<dbReference type="PANTHER" id="PTHR33908">
    <property type="entry name" value="MANNOSYLTRANSFERASE YKCB-RELATED"/>
    <property type="match status" value="1"/>
</dbReference>
<dbReference type="PANTHER" id="PTHR33908:SF11">
    <property type="entry name" value="MEMBRANE PROTEIN"/>
    <property type="match status" value="1"/>
</dbReference>
<dbReference type="Pfam" id="PF13231">
    <property type="entry name" value="PMT_2"/>
    <property type="match status" value="1"/>
</dbReference>
<protein>
    <recommendedName>
        <fullName evidence="4">Lipid A galacturonosyltransferase RgtD</fullName>
        <shortName evidence="4">Lipid A GalA transferase RgtD</shortName>
        <ecNumber evidence="4">2.4.1.-</ecNumber>
    </recommendedName>
    <alternativeName>
        <fullName evidence="3">Galacturonic acid transferase RgtD</fullName>
        <shortName evidence="3">GalAT RgtD</shortName>
    </alternativeName>
</protein>
<sequence length="473" mass="52334">MSPRSGLLIVLGFTLWRVVMLNFDATDFFVDEAQYWFWSQNLDLGYYSKPPMIAWVIRAMTELSGSNAIYWIRLLGPLIHMAAALVLMKTAKRFVGPEIEGWTGATYITLPGVALSSVFFSTDVILLFFIAIALLAYFGLTQRRSVGLALVMGLGVGLAFLTKYAVLFVVPGGAIALLLIPAARIAVRDVIIAVAVAAVVALPNLWWNLQHDNTTVRHTQDIAHWSELGINLRRGLEFFAAQFGVVGPIIFFAMLWAVYRMIRGRSDDREKMLVWLSMPVVLLITLQATVAKAYANWAVTAYVAGTILAVWLLYLKWPKGLRLSLTINGIASLLFPLATIFPHQLLLPNGDALMKRYLGRAEVSREAAALATQAGTDIIVTDNRDMVADLFYTLRDASYRIYARAPAGLPESYYEQEFALPADITGKVLFLTDGAFTCATETPEVLKNWQPTEGNYKGKTLSIYKVSATCLAP</sequence>
<feature type="chain" id="PRO_0000436512" description="Lipid A galacturonosyltransferase RgtD">
    <location>
        <begin position="1"/>
        <end position="473"/>
    </location>
</feature>
<feature type="transmembrane region" description="Helical" evidence="1">
    <location>
        <begin position="6"/>
        <end position="26"/>
    </location>
</feature>
<feature type="transmembrane region" description="Helical" evidence="1">
    <location>
        <begin position="68"/>
        <end position="88"/>
    </location>
</feature>
<feature type="transmembrane region" description="Helical" evidence="1">
    <location>
        <begin position="94"/>
        <end position="114"/>
    </location>
</feature>
<feature type="transmembrane region" description="Helical" evidence="1">
    <location>
        <begin position="118"/>
        <end position="138"/>
    </location>
</feature>
<feature type="transmembrane region" description="Helical" evidence="1">
    <location>
        <begin position="160"/>
        <end position="180"/>
    </location>
</feature>
<feature type="transmembrane region" description="Helical" evidence="1">
    <location>
        <begin position="190"/>
        <end position="210"/>
    </location>
</feature>
<feature type="transmembrane region" description="Helical" evidence="1">
    <location>
        <begin position="238"/>
        <end position="258"/>
    </location>
</feature>
<feature type="transmembrane region" description="Helical" evidence="1">
    <location>
        <begin position="271"/>
        <end position="291"/>
    </location>
</feature>
<feature type="transmembrane region" description="Helical" evidence="1">
    <location>
        <begin position="295"/>
        <end position="315"/>
    </location>
</feature>
<feature type="transmembrane region" description="Helical" evidence="1">
    <location>
        <begin position="327"/>
        <end position="347"/>
    </location>
</feature>
<comment type="function">
    <text evidence="2">Involved in the modification of the lipopolysaccharide (LPS) lipid A moiety. Catalyzes the transfer of a galacturonic acid (GalA) residue to the 4'-position of 4'-dephosphorylated lipid A, using dodecaprenyl phosphate-GalA as the donor substrate. Acts before the other GalA transferases RgtA, RgtB and RgtC.</text>
</comment>
<comment type="pathway">
    <text evidence="2">Bacterial outer membrane biogenesis; LPS lipid A biosynthesis.</text>
</comment>
<comment type="subcellular location">
    <subcellularLocation>
        <location evidence="1">Cell membrane</location>
        <topology evidence="1">Multi-pass membrane protein</topology>
    </subcellularLocation>
</comment>
<comment type="disruption phenotype">
    <text evidence="2">Cells lacking this gene produce lipid A that lacks any detectable GalA. Inactivation of this gene also results in a product that is affected in the addition of GalA to all positions in the LPS core oligosaccharide, possibly by acting as a less than an optimal substrate for RgtA, RgtB and RgtC. The mutant strains are more susceptible to deoxycholic acid and to the polycationic antimicrobial peptide PmxB when compared with the parent strain.</text>
</comment>
<name>RGTD_RHIJ3</name>
<gene>
    <name evidence="3" type="primary">rgtD</name>
    <name evidence="5" type="ordered locus">RL0684</name>
</gene>
<proteinExistence type="inferred from homology"/>
<evidence type="ECO:0000255" key="1"/>
<evidence type="ECO:0000269" key="2">
    <source>
    </source>
</evidence>
<evidence type="ECO:0000303" key="3">
    <source>
    </source>
</evidence>
<evidence type="ECO:0000305" key="4">
    <source>
    </source>
</evidence>
<evidence type="ECO:0000312" key="5">
    <source>
        <dbReference type="EMBL" id="CAK06178.1"/>
    </source>
</evidence>